<organism>
    <name type="scientific">Physcomitrium patens</name>
    <name type="common">Spreading-leaved earth moss</name>
    <name type="synonym">Physcomitrella patens</name>
    <dbReference type="NCBI Taxonomy" id="3218"/>
    <lineage>
        <taxon>Eukaryota</taxon>
        <taxon>Viridiplantae</taxon>
        <taxon>Streptophyta</taxon>
        <taxon>Embryophyta</taxon>
        <taxon>Bryophyta</taxon>
        <taxon>Bryophytina</taxon>
        <taxon>Bryopsida</taxon>
        <taxon>Funariidae</taxon>
        <taxon>Funariales</taxon>
        <taxon>Funariaceae</taxon>
        <taxon>Physcomitrium</taxon>
    </lineage>
</organism>
<proteinExistence type="inferred from homology"/>
<sequence>MAVPKKRTSKSKKKIRETVWREKANQARIKAFSLAQSILTGRSKSFYYTTTEKDSNLSE</sequence>
<name>RK32_PHYPA</name>
<gene>
    <name evidence="1" type="primary">rpl32</name>
</gene>
<keyword id="KW-0150">Chloroplast</keyword>
<keyword id="KW-0934">Plastid</keyword>
<keyword id="KW-1185">Reference proteome</keyword>
<keyword id="KW-0687">Ribonucleoprotein</keyword>
<keyword id="KW-0689">Ribosomal protein</keyword>
<evidence type="ECO:0000255" key="1">
    <source>
        <dbReference type="HAMAP-Rule" id="MF_00340"/>
    </source>
</evidence>
<evidence type="ECO:0000305" key="2"/>
<accession>Q6YXQ4</accession>
<geneLocation type="chloroplast"/>
<reference key="1">
    <citation type="journal article" date="2003" name="Nucleic Acids Res.">
        <title>Complete chloroplast DNA sequence of the moss Physcomitrella patens: evidence for the loss and relocation of rpoA from the chloroplast to the nucleus.</title>
        <authorList>
            <person name="Sugiura C."/>
            <person name="Kobayashi Y."/>
            <person name="Setsuyuki A."/>
            <person name="Sugita C."/>
            <person name="Sugita M."/>
        </authorList>
    </citation>
    <scope>NUCLEOTIDE SEQUENCE [LARGE SCALE GENOMIC DNA]</scope>
    <source>
        <strain>cv. Gransden 2004</strain>
    </source>
</reference>
<protein>
    <recommendedName>
        <fullName evidence="1">Large ribosomal subunit protein bL32c</fullName>
    </recommendedName>
    <alternativeName>
        <fullName evidence="2">50S ribosomal protein L32, chloroplastic</fullName>
    </alternativeName>
</protein>
<comment type="subcellular location">
    <subcellularLocation>
        <location>Plastid</location>
        <location>Chloroplast</location>
    </subcellularLocation>
</comment>
<comment type="similarity">
    <text evidence="1">Belongs to the bacterial ribosomal protein bL32 family.</text>
</comment>
<dbReference type="EMBL" id="AP005672">
    <property type="protein sequence ID" value="BAC85087.1"/>
    <property type="molecule type" value="Genomic_DNA"/>
</dbReference>
<dbReference type="RefSeq" id="NP_904237.1">
    <property type="nucleotide sequence ID" value="NC_005087.2"/>
</dbReference>
<dbReference type="RefSeq" id="YP_009477567.1">
    <property type="nucleotide sequence ID" value="NC_037465.1"/>
</dbReference>
<dbReference type="SMR" id="Q6YXQ4"/>
<dbReference type="FunCoup" id="Q6YXQ4">
    <property type="interactions" value="458"/>
</dbReference>
<dbReference type="STRING" id="3218.Q6YXQ4"/>
<dbReference type="GeneID" id="2546789"/>
<dbReference type="GeneID" id="36487210"/>
<dbReference type="KEGG" id="ppp:2546789"/>
<dbReference type="InParanoid" id="Q6YXQ4"/>
<dbReference type="OrthoDB" id="1938523at2759"/>
<dbReference type="Proteomes" id="UP000006727">
    <property type="component" value="Chloroplast"/>
</dbReference>
<dbReference type="GO" id="GO:0009507">
    <property type="term" value="C:chloroplast"/>
    <property type="evidence" value="ECO:0007669"/>
    <property type="project" value="UniProtKB-SubCell"/>
</dbReference>
<dbReference type="GO" id="GO:0015934">
    <property type="term" value="C:large ribosomal subunit"/>
    <property type="evidence" value="ECO:0007669"/>
    <property type="project" value="InterPro"/>
</dbReference>
<dbReference type="GO" id="GO:0003735">
    <property type="term" value="F:structural constituent of ribosome"/>
    <property type="evidence" value="ECO:0007669"/>
    <property type="project" value="InterPro"/>
</dbReference>
<dbReference type="GO" id="GO:0006412">
    <property type="term" value="P:translation"/>
    <property type="evidence" value="ECO:0007669"/>
    <property type="project" value="UniProtKB-UniRule"/>
</dbReference>
<dbReference type="HAMAP" id="MF_00340">
    <property type="entry name" value="Ribosomal_bL32"/>
    <property type="match status" value="1"/>
</dbReference>
<dbReference type="InterPro" id="IPR002677">
    <property type="entry name" value="Ribosomal_bL32"/>
</dbReference>
<dbReference type="InterPro" id="IPR044958">
    <property type="entry name" value="Ribosomal_bL32_plant/cyanobact"/>
</dbReference>
<dbReference type="InterPro" id="IPR011332">
    <property type="entry name" value="Ribosomal_zn-bd"/>
</dbReference>
<dbReference type="PANTHER" id="PTHR36083">
    <property type="entry name" value="50S RIBOSOMAL PROTEIN L32, CHLOROPLASTIC"/>
    <property type="match status" value="1"/>
</dbReference>
<dbReference type="PANTHER" id="PTHR36083:SF1">
    <property type="entry name" value="LARGE RIBOSOMAL SUBUNIT PROTEIN BL32C"/>
    <property type="match status" value="1"/>
</dbReference>
<dbReference type="Pfam" id="PF01783">
    <property type="entry name" value="Ribosomal_L32p"/>
    <property type="match status" value="1"/>
</dbReference>
<dbReference type="SUPFAM" id="SSF57829">
    <property type="entry name" value="Zn-binding ribosomal proteins"/>
    <property type="match status" value="1"/>
</dbReference>
<feature type="chain" id="PRO_0000172472" description="Large ribosomal subunit protein bL32c">
    <location>
        <begin position="1"/>
        <end position="59"/>
    </location>
</feature>